<dbReference type="EMBL" id="AJ006994">
    <property type="protein sequence ID" value="CAA07415.2"/>
    <property type="molecule type" value="Genomic_DNA"/>
</dbReference>
<dbReference type="PIR" id="S12900">
    <property type="entry name" value="S12900"/>
</dbReference>
<dbReference type="PDB" id="1QGW">
    <property type="method" value="X-ray"/>
    <property type="resolution" value="1.63 A"/>
    <property type="chains" value="A=53-128"/>
</dbReference>
<dbReference type="PDB" id="1XF6">
    <property type="method" value="X-ray"/>
    <property type="resolution" value="1.10 A"/>
    <property type="chains" value="A=53-128"/>
</dbReference>
<dbReference type="PDB" id="1XG0">
    <property type="method" value="X-ray"/>
    <property type="resolution" value="0.97 A"/>
    <property type="chains" value="A=53-128"/>
</dbReference>
<dbReference type="PDBsum" id="1QGW"/>
<dbReference type="PDBsum" id="1XF6"/>
<dbReference type="PDBsum" id="1XG0"/>
<dbReference type="SMR" id="Q00433"/>
<dbReference type="EvolutionaryTrace" id="Q00433"/>
<dbReference type="GO" id="GO:0009535">
    <property type="term" value="C:chloroplast thylakoid membrane"/>
    <property type="evidence" value="ECO:0007669"/>
    <property type="project" value="UniProtKB-SubCell"/>
</dbReference>
<dbReference type="GO" id="GO:0030089">
    <property type="term" value="C:phycobilisome"/>
    <property type="evidence" value="ECO:0007669"/>
    <property type="project" value="InterPro"/>
</dbReference>
<dbReference type="GO" id="GO:0015979">
    <property type="term" value="P:photosynthesis"/>
    <property type="evidence" value="ECO:0007669"/>
    <property type="project" value="UniProtKB-KW"/>
</dbReference>
<dbReference type="Gene3D" id="3.90.510.10">
    <property type="entry name" value="Phycoerythrin alpha chain"/>
    <property type="match status" value="1"/>
</dbReference>
<dbReference type="InterPro" id="IPR011070">
    <property type="entry name" value="Globular_prot_asu/bsu"/>
</dbReference>
<dbReference type="InterPro" id="IPR037011">
    <property type="entry name" value="Phycoerythr-like_a_sf"/>
</dbReference>
<dbReference type="InterPro" id="IPR004228">
    <property type="entry name" value="Phycoerythr_a"/>
</dbReference>
<dbReference type="InterPro" id="IPR006311">
    <property type="entry name" value="TAT_signal"/>
</dbReference>
<dbReference type="Pfam" id="PF02972">
    <property type="entry name" value="Phycoerythr_ab"/>
    <property type="match status" value="1"/>
</dbReference>
<dbReference type="SUPFAM" id="SSF56568">
    <property type="entry name" value="Non-globular alpha+beta subunits of globular proteins"/>
    <property type="match status" value="1"/>
</dbReference>
<dbReference type="PROSITE" id="PS51318">
    <property type="entry name" value="TAT"/>
    <property type="match status" value="1"/>
</dbReference>
<sequence length="128" mass="13175">MFAKTLASLAVIGSAAAYVPMMSMDMGRREVVQAGAAAAAVTPFLSGAPAGAAMDKSAKAPQITIFDHRGCSRAPKESTGGKAGGQDDEMMVKVASTKVTVSESDAAKKLQEFITFEKGIDGPFTSKN</sequence>
<comment type="function">
    <text>Light-harvesting photosynthetic tetrapyrrole chromophore-protein from the phycobiliprotein complex.</text>
</comment>
<comment type="subunit">
    <text evidence="2 3">Heterotetramer of 2 different alpha chains and 2 identical beta chains. The subunit composition could comprise of any combination of 2 out of 4 different alpha units with an invariant beta unit.</text>
</comment>
<comment type="subcellular location">
    <subcellularLocation>
        <location>Plastid</location>
        <location>Chloroplast thylakoid membrane</location>
        <topology>Peripheral membrane protein</topology>
        <orientation>Lumenal side</orientation>
    </subcellularLocation>
</comment>
<comment type="PTM">
    <text>Contains one covalently linked 15,16-dihydrobiliverdin chromophore.</text>
</comment>
<comment type="miscellaneous">
    <text>The light-harvesting system in Cryptophytes contains phycobiliprotein complexes. Unusually they are composed of either phycoerythrin (CPE) or phycocyanin (CPC) but never allophycocyanin (APC), with only one type of biliprotein being present in any one species. Unlike cyanobacteria or red algae these proteins are not arranged into higher-order phycobilisome complexes, and they are found in the thylakoid lumen.</text>
</comment>
<comment type="similarity">
    <text evidence="4">Belongs to the phycoerythrin family.</text>
</comment>
<organism>
    <name type="scientific">Rhodomonas sp. (strain CS 24)</name>
    <name type="common">Chroomonas sp. (strain CS24)</name>
    <dbReference type="NCBI Taxonomy" id="79257"/>
    <lineage>
        <taxon>Eukaryota</taxon>
        <taxon>Cryptophyceae</taxon>
        <taxon>Pyrenomonadales</taxon>
        <taxon>Pyrenomonadaceae</taxon>
        <taxon>Rhodomonas</taxon>
    </lineage>
</organism>
<reference key="1">
    <citation type="journal article" date="1990" name="FEBS Lett.">
        <title>A genomic clone encoding a cryptophyte phycoerythrin alpha-subunit. Evidence for three alpha-subunits and an N-terminal membrane transit sequence.</title>
        <authorList>
            <person name="Jenkins J."/>
            <person name="Hiller R.G."/>
            <person name="Speirs J."/>
            <person name="Godovac-Zimmermann J."/>
        </authorList>
    </citation>
    <scope>NUCLEOTIDE SEQUENCE [GENOMIC DNA]</scope>
</reference>
<reference key="2">
    <citation type="journal article" date="1991" name="FEBS Lett.">
        <authorList>
            <person name="Jenkins J."/>
            <person name="Hiller R.G."/>
            <person name="Speirs J."/>
            <person name="Godovac-Zimmermann J."/>
        </authorList>
    </citation>
    <scope>ERRATUM OF PUBMED:2226853</scope>
</reference>
<reference key="3">
    <citation type="submission" date="2001-11" db="EMBL/GenBank/DDBJ databases">
        <title>Nuclear-encoded genes of phycoerythrin alpha subunits.</title>
        <authorList>
            <person name="Hiller R.G."/>
            <person name="Howe C.E."/>
        </authorList>
    </citation>
    <scope>NUCLEOTIDE SEQUENCE [GENOMIC DNA]</scope>
    <scope>SEQUENCE REVISION TO 62</scope>
</reference>
<reference key="4">
    <citation type="journal article" date="1999" name="Proc. Natl. Acad. Sci. U.S.A.">
        <title>Evolution of a light-harvesting protein by addition of new subunits and rearrangement of conserved elements: crystal structure of a cryptophyte phycoerythrin at 1.63-A resolution.</title>
        <authorList>
            <person name="Wilk K.E."/>
            <person name="Harrop S.J."/>
            <person name="Jankova L."/>
            <person name="Edler D."/>
            <person name="Keenan G."/>
            <person name="Sharples F."/>
            <person name="Hiller R.G."/>
            <person name="Curmi P.M."/>
        </authorList>
    </citation>
    <scope>X-RAY CRYSTALLOGRAPHY (1.63 ANGSTROMS) OF 53-128 IN COMPLEX WITH CPEA2; CPEB AND 15,16-DIHYDROBILIVERDIN</scope>
    <scope>SUBUNIT</scope>
    <scope>HYDROXYLATION AT LYS-56</scope>
</reference>
<reference key="5">
    <citation type="journal article" date="2004" name="J. Mol. Biol.">
        <title>Developing a structure-function model for the cryptophyte phycoerythrin 545 using ultrahigh resolution crystallography and ultrafast laser spectroscopy.</title>
        <authorList>
            <person name="Doust A.B."/>
            <person name="Marai C.N."/>
            <person name="Harrop S.J."/>
            <person name="Wilk K.E."/>
            <person name="Curmi P.M."/>
            <person name="Scholes G.D."/>
        </authorList>
    </citation>
    <scope>X-RAY CRYSTALLOGRAPHY (0.97 ANGSTROMS) OF 53-128 IN COMPLEX WITH CPEA2; CPEB AND 15,16-DIHYDROBILIVERDIN</scope>
    <scope>SUBUNIT</scope>
    <scope>HYDROXYLATION AT LYS-56</scope>
</reference>
<name>PHE3_RHDS2</name>
<gene>
    <name type="primary">cpeA3</name>
</gene>
<accession>Q00433</accession>
<accession>O82050</accession>
<feature type="transit peptide" description="Chloroplast">
    <location>
        <begin position="1"/>
        <end position="52"/>
    </location>
</feature>
<feature type="chain" id="PRO_0000002828" description="Phycoerythrin alpha-3 chain, chloroplastic">
    <location>
        <begin position="53"/>
        <end position="128"/>
    </location>
</feature>
<feature type="region of interest" description="Disordered" evidence="1">
    <location>
        <begin position="70"/>
        <end position="89"/>
    </location>
</feature>
<feature type="binding site" description="covalent" evidence="2 3">
    <location>
        <position position="71"/>
    </location>
    <ligand>
        <name>15,16-dihydrobiliverdin</name>
        <dbReference type="ChEBI" id="CHEBI:57899"/>
    </ligand>
</feature>
<feature type="binding site" evidence="2 3">
    <location>
        <position position="73"/>
    </location>
    <ligand>
        <name>15,16-dihydrobiliverdin</name>
        <dbReference type="ChEBI" id="CHEBI:57899"/>
    </ligand>
</feature>
<feature type="binding site">
    <location>
        <begin position="77"/>
        <end position="78"/>
    </location>
    <ligand>
        <name>15,16-dihydrobiliverdin</name>
        <dbReference type="ChEBI" id="CHEBI:57899"/>
    </ligand>
</feature>
<feature type="binding site" evidence="2 3">
    <location>
        <position position="93"/>
    </location>
    <ligand>
        <name>15,16-dihydrobiliverdin</name>
        <dbReference type="ChEBI" id="CHEBI:57899"/>
    </ligand>
</feature>
<feature type="modified residue" description="5-hydroxylysine" evidence="2 3">
    <location>
        <position position="56"/>
    </location>
</feature>
<feature type="strand" evidence="5">
    <location>
        <begin position="59"/>
        <end position="67"/>
    </location>
</feature>
<feature type="helix" evidence="5">
    <location>
        <begin position="86"/>
        <end position="89"/>
    </location>
</feature>
<feature type="strand" evidence="5">
    <location>
        <begin position="90"/>
        <end position="98"/>
    </location>
</feature>
<feature type="helix" evidence="5">
    <location>
        <begin position="103"/>
        <end position="113"/>
    </location>
</feature>
<feature type="strand" evidence="5">
    <location>
        <begin position="120"/>
        <end position="122"/>
    </location>
</feature>
<protein>
    <recommendedName>
        <fullName>Phycoerythrin alpha-3 chain, chloroplastic</fullName>
    </recommendedName>
</protein>
<evidence type="ECO:0000256" key="1">
    <source>
        <dbReference type="SAM" id="MobiDB-lite"/>
    </source>
</evidence>
<evidence type="ECO:0000269" key="2">
    <source>
    </source>
</evidence>
<evidence type="ECO:0000269" key="3">
    <source>
    </source>
</evidence>
<evidence type="ECO:0000305" key="4"/>
<evidence type="ECO:0007829" key="5">
    <source>
        <dbReference type="PDB" id="1XG0"/>
    </source>
</evidence>
<keyword id="KW-0002">3D-structure</keyword>
<keyword id="KW-0089">Bile pigment</keyword>
<keyword id="KW-0150">Chloroplast</keyword>
<keyword id="KW-0157">Chromophore</keyword>
<keyword id="KW-0249">Electron transport</keyword>
<keyword id="KW-0379">Hydroxylation</keyword>
<keyword id="KW-0472">Membrane</keyword>
<keyword id="KW-0602">Photosynthesis</keyword>
<keyword id="KW-0934">Plastid</keyword>
<keyword id="KW-0793">Thylakoid</keyword>
<keyword id="KW-0809">Transit peptide</keyword>
<keyword id="KW-0813">Transport</keyword>
<proteinExistence type="evidence at protein level"/>